<sequence length="49" mass="5781">MGCAKSELLILLEYIDRECKDYESCKRIIVELEERVKKIAFVEAINDLF</sequence>
<name>B49_SSV1</name>
<organism>
    <name type="scientific">Sulfolobus spindle-shape virus 1</name>
    <name type="common">SSV1</name>
    <dbReference type="NCBI Taxonomy" id="244589"/>
    <lineage>
        <taxon>Viruses</taxon>
        <taxon>Viruses incertae sedis</taxon>
        <taxon>Fuselloviridae</taxon>
        <taxon>Alphafusellovirus</taxon>
    </lineage>
</organism>
<reference key="1">
    <citation type="journal article" date="1991" name="Virology">
        <title>Complete nucleotide sequence of the virus SSV1 of the archaebacterium Sulfolobus shibatae.</title>
        <authorList>
            <person name="Palm P."/>
            <person name="Schleper C."/>
            <person name="Grampp B."/>
            <person name="Yeats S."/>
            <person name="McWilliam P."/>
            <person name="Reiter W.-D."/>
            <person name="Zillig W."/>
        </authorList>
    </citation>
    <scope>NUCLEOTIDE SEQUENCE [GENOMIC DNA]</scope>
</reference>
<protein>
    <recommendedName>
        <fullName>Uncharacterized protein B-49</fullName>
    </recommendedName>
</protein>
<accession>P20204</accession>
<keyword id="KW-1185">Reference proteome</keyword>
<proteinExistence type="predicted"/>
<gene>
    <name type="ORF">b49</name>
</gene>
<feature type="chain" id="PRO_0000223028" description="Uncharacterized protein B-49">
    <location>
        <begin position="1"/>
        <end position="49"/>
    </location>
</feature>
<dbReference type="EMBL" id="X07234">
    <property type="protein sequence ID" value="CAA30221.1"/>
    <property type="molecule type" value="Genomic_DNA"/>
</dbReference>
<dbReference type="PIR" id="S03222">
    <property type="entry name" value="S03222"/>
</dbReference>
<dbReference type="RefSeq" id="NP_039788.1">
    <property type="nucleotide sequence ID" value="NC_001338.1"/>
</dbReference>
<dbReference type="SMR" id="P20204"/>
<dbReference type="KEGG" id="vg:2559640"/>
<dbReference type="Proteomes" id="UP000000854">
    <property type="component" value="Genome"/>
</dbReference>
<organismHost>
    <name type="scientific">Saccharolobus solfataricus</name>
    <name type="common">Sulfolobus solfataricus</name>
    <dbReference type="NCBI Taxonomy" id="2287"/>
</organismHost>